<dbReference type="EC" id="1.1.1.23" evidence="1"/>
<dbReference type="EMBL" id="AE017221">
    <property type="protein sequence ID" value="AAS80718.1"/>
    <property type="molecule type" value="Genomic_DNA"/>
</dbReference>
<dbReference type="RefSeq" id="WP_011172819.1">
    <property type="nucleotide sequence ID" value="NC_005835.1"/>
</dbReference>
<dbReference type="SMR" id="P62460"/>
<dbReference type="KEGG" id="tth:TT_C0370"/>
<dbReference type="eggNOG" id="COG0141">
    <property type="taxonomic scope" value="Bacteria"/>
</dbReference>
<dbReference type="HOGENOM" id="CLU_006732_3_3_0"/>
<dbReference type="OrthoDB" id="9805269at2"/>
<dbReference type="UniPathway" id="UPA00031">
    <property type="reaction ID" value="UER00014"/>
</dbReference>
<dbReference type="Proteomes" id="UP000000592">
    <property type="component" value="Chromosome"/>
</dbReference>
<dbReference type="GO" id="GO:0005829">
    <property type="term" value="C:cytosol"/>
    <property type="evidence" value="ECO:0007669"/>
    <property type="project" value="TreeGrafter"/>
</dbReference>
<dbReference type="GO" id="GO:0004399">
    <property type="term" value="F:histidinol dehydrogenase activity"/>
    <property type="evidence" value="ECO:0007669"/>
    <property type="project" value="UniProtKB-UniRule"/>
</dbReference>
<dbReference type="GO" id="GO:0051287">
    <property type="term" value="F:NAD binding"/>
    <property type="evidence" value="ECO:0007669"/>
    <property type="project" value="InterPro"/>
</dbReference>
<dbReference type="GO" id="GO:0008270">
    <property type="term" value="F:zinc ion binding"/>
    <property type="evidence" value="ECO:0007669"/>
    <property type="project" value="UniProtKB-UniRule"/>
</dbReference>
<dbReference type="GO" id="GO:0000105">
    <property type="term" value="P:L-histidine biosynthetic process"/>
    <property type="evidence" value="ECO:0007669"/>
    <property type="project" value="UniProtKB-UniRule"/>
</dbReference>
<dbReference type="CDD" id="cd06572">
    <property type="entry name" value="Histidinol_dh"/>
    <property type="match status" value="1"/>
</dbReference>
<dbReference type="FunFam" id="3.40.50.1980:FF:000001">
    <property type="entry name" value="Histidinol dehydrogenase"/>
    <property type="match status" value="1"/>
</dbReference>
<dbReference type="Gene3D" id="1.20.5.1300">
    <property type="match status" value="1"/>
</dbReference>
<dbReference type="Gene3D" id="3.40.50.1980">
    <property type="entry name" value="Nitrogenase molybdenum iron protein domain"/>
    <property type="match status" value="2"/>
</dbReference>
<dbReference type="HAMAP" id="MF_01024">
    <property type="entry name" value="HisD"/>
    <property type="match status" value="1"/>
</dbReference>
<dbReference type="InterPro" id="IPR016161">
    <property type="entry name" value="Ald_DH/histidinol_DH"/>
</dbReference>
<dbReference type="InterPro" id="IPR001692">
    <property type="entry name" value="Histidinol_DH_CS"/>
</dbReference>
<dbReference type="InterPro" id="IPR022695">
    <property type="entry name" value="Histidinol_DH_monofunct"/>
</dbReference>
<dbReference type="InterPro" id="IPR012131">
    <property type="entry name" value="Hstdl_DH"/>
</dbReference>
<dbReference type="NCBIfam" id="TIGR00069">
    <property type="entry name" value="hisD"/>
    <property type="match status" value="1"/>
</dbReference>
<dbReference type="PANTHER" id="PTHR21256:SF2">
    <property type="entry name" value="HISTIDINE BIOSYNTHESIS TRIFUNCTIONAL PROTEIN"/>
    <property type="match status" value="1"/>
</dbReference>
<dbReference type="PANTHER" id="PTHR21256">
    <property type="entry name" value="HISTIDINOL DEHYDROGENASE HDH"/>
    <property type="match status" value="1"/>
</dbReference>
<dbReference type="Pfam" id="PF00815">
    <property type="entry name" value="Histidinol_dh"/>
    <property type="match status" value="1"/>
</dbReference>
<dbReference type="PIRSF" id="PIRSF000099">
    <property type="entry name" value="Histidinol_dh"/>
    <property type="match status" value="1"/>
</dbReference>
<dbReference type="PRINTS" id="PR00083">
    <property type="entry name" value="HOLDHDRGNASE"/>
</dbReference>
<dbReference type="SUPFAM" id="SSF53720">
    <property type="entry name" value="ALDH-like"/>
    <property type="match status" value="1"/>
</dbReference>
<dbReference type="PROSITE" id="PS00611">
    <property type="entry name" value="HISOL_DEHYDROGENASE"/>
    <property type="match status" value="1"/>
</dbReference>
<name>HISX_THET2</name>
<comment type="function">
    <text evidence="1">Catalyzes the sequential NAD-dependent oxidations of L-histidinol to L-histidinaldehyde and then to L-histidine.</text>
</comment>
<comment type="catalytic activity">
    <reaction evidence="1">
        <text>L-histidinol + 2 NAD(+) + H2O = L-histidine + 2 NADH + 3 H(+)</text>
        <dbReference type="Rhea" id="RHEA:20641"/>
        <dbReference type="ChEBI" id="CHEBI:15377"/>
        <dbReference type="ChEBI" id="CHEBI:15378"/>
        <dbReference type="ChEBI" id="CHEBI:57540"/>
        <dbReference type="ChEBI" id="CHEBI:57595"/>
        <dbReference type="ChEBI" id="CHEBI:57699"/>
        <dbReference type="ChEBI" id="CHEBI:57945"/>
        <dbReference type="EC" id="1.1.1.23"/>
    </reaction>
</comment>
<comment type="cofactor">
    <cofactor evidence="1">
        <name>Zn(2+)</name>
        <dbReference type="ChEBI" id="CHEBI:29105"/>
    </cofactor>
    <text evidence="1">Binds 1 zinc ion per subunit.</text>
</comment>
<comment type="pathway">
    <text evidence="1">Amino-acid biosynthesis; L-histidine biosynthesis; L-histidine from 5-phospho-alpha-D-ribose 1-diphosphate: step 9/9.</text>
</comment>
<comment type="similarity">
    <text evidence="1">Belongs to the histidinol dehydrogenase family.</text>
</comment>
<reference key="1">
    <citation type="journal article" date="2004" name="Nat. Biotechnol.">
        <title>The genome sequence of the extreme thermophile Thermus thermophilus.</title>
        <authorList>
            <person name="Henne A."/>
            <person name="Brueggemann H."/>
            <person name="Raasch C."/>
            <person name="Wiezer A."/>
            <person name="Hartsch T."/>
            <person name="Liesegang H."/>
            <person name="Johann A."/>
            <person name="Lienard T."/>
            <person name="Gohl O."/>
            <person name="Martinez-Arias R."/>
            <person name="Jacobi C."/>
            <person name="Starkuviene V."/>
            <person name="Schlenczeck S."/>
            <person name="Dencker S."/>
            <person name="Huber R."/>
            <person name="Klenk H.-P."/>
            <person name="Kramer W."/>
            <person name="Merkl R."/>
            <person name="Gottschalk G."/>
            <person name="Fritz H.-J."/>
        </authorList>
    </citation>
    <scope>NUCLEOTIDE SEQUENCE [LARGE SCALE GENOMIC DNA]</scope>
    <source>
        <strain>ATCC BAA-163 / DSM 7039 / HB27</strain>
    </source>
</reference>
<feature type="chain" id="PRO_0000135870" description="Histidinol dehydrogenase">
    <location>
        <begin position="1"/>
        <end position="412"/>
    </location>
</feature>
<feature type="active site" description="Proton acceptor" evidence="1">
    <location>
        <position position="311"/>
    </location>
</feature>
<feature type="active site" description="Proton acceptor" evidence="1">
    <location>
        <position position="312"/>
    </location>
</feature>
<feature type="binding site" evidence="1">
    <location>
        <position position="118"/>
    </location>
    <ligand>
        <name>NAD(+)</name>
        <dbReference type="ChEBI" id="CHEBI:57540"/>
    </ligand>
</feature>
<feature type="binding site" evidence="1">
    <location>
        <position position="176"/>
    </location>
    <ligand>
        <name>NAD(+)</name>
        <dbReference type="ChEBI" id="CHEBI:57540"/>
    </ligand>
</feature>
<feature type="binding site" evidence="1">
    <location>
        <position position="199"/>
    </location>
    <ligand>
        <name>NAD(+)</name>
        <dbReference type="ChEBI" id="CHEBI:57540"/>
    </ligand>
</feature>
<feature type="binding site" evidence="1">
    <location>
        <position position="222"/>
    </location>
    <ligand>
        <name>substrate</name>
    </ligand>
</feature>
<feature type="binding site" evidence="1">
    <location>
        <position position="244"/>
    </location>
    <ligand>
        <name>substrate</name>
    </ligand>
</feature>
<feature type="binding site" evidence="1">
    <location>
        <position position="244"/>
    </location>
    <ligand>
        <name>Zn(2+)</name>
        <dbReference type="ChEBI" id="CHEBI:29105"/>
    </ligand>
</feature>
<feature type="binding site" evidence="1">
    <location>
        <position position="247"/>
    </location>
    <ligand>
        <name>substrate</name>
    </ligand>
</feature>
<feature type="binding site" evidence="1">
    <location>
        <position position="247"/>
    </location>
    <ligand>
        <name>Zn(2+)</name>
        <dbReference type="ChEBI" id="CHEBI:29105"/>
    </ligand>
</feature>
<feature type="binding site" evidence="1">
    <location>
        <position position="312"/>
    </location>
    <ligand>
        <name>substrate</name>
    </ligand>
</feature>
<feature type="binding site" evidence="1">
    <location>
        <position position="345"/>
    </location>
    <ligand>
        <name>substrate</name>
    </ligand>
</feature>
<feature type="binding site" evidence="1">
    <location>
        <position position="345"/>
    </location>
    <ligand>
        <name>Zn(2+)</name>
        <dbReference type="ChEBI" id="CHEBI:29105"/>
    </ligand>
</feature>
<feature type="binding site" evidence="1">
    <location>
        <position position="399"/>
    </location>
    <ligand>
        <name>substrate</name>
    </ligand>
</feature>
<feature type="binding site" evidence="1">
    <location>
        <position position="404"/>
    </location>
    <ligand>
        <name>substrate</name>
    </ligand>
</feature>
<feature type="binding site" evidence="1">
    <location>
        <position position="404"/>
    </location>
    <ligand>
        <name>Zn(2+)</name>
        <dbReference type="ChEBI" id="CHEBI:29105"/>
    </ligand>
</feature>
<accession>P62460</accession>
<sequence>MIYAAEEVRARFARRGLSFDPTVEEIVRGILEAVREEGDEALDRFSRDLDGYPVEEVPKRAWREAYEDLDEDLRDALETARERIEAFYREEARGGFLRAEGGGVLAQLVRPLERVGVYVPGGSAPLLSTLLMTVVPAKVAGVREVIVASPPKVHPGVLAAAWVAGADRLFAMGGAQAIAALAYGTGRVPRVDKIVGPGNRYVVAAKRLVYGTVGIDGLAGPTETMIIADGSASPRLLAADLLAQAEHGPDSEPWLLSPDRALLERVEAELSRQLQDLPRAEVARQALEKGGLVLTKDLEEAFALANLYAPEHLSLALSDPLPWLEKVQNAGGVFLGEGSPEALGDYIAGPSHVMPTSGTARFQGGLAVRDFLKVIPVVGLSEGAARELAKKGALLARAEGLEGHARSLDLRR</sequence>
<proteinExistence type="inferred from homology"/>
<keyword id="KW-0028">Amino-acid biosynthesis</keyword>
<keyword id="KW-0368">Histidine biosynthesis</keyword>
<keyword id="KW-0479">Metal-binding</keyword>
<keyword id="KW-0520">NAD</keyword>
<keyword id="KW-0560">Oxidoreductase</keyword>
<keyword id="KW-0862">Zinc</keyword>
<evidence type="ECO:0000255" key="1">
    <source>
        <dbReference type="HAMAP-Rule" id="MF_01024"/>
    </source>
</evidence>
<protein>
    <recommendedName>
        <fullName evidence="1">Histidinol dehydrogenase</fullName>
        <shortName evidence="1">HDH</shortName>
        <ecNumber evidence="1">1.1.1.23</ecNumber>
    </recommendedName>
</protein>
<organism>
    <name type="scientific">Thermus thermophilus (strain ATCC BAA-163 / DSM 7039 / HB27)</name>
    <dbReference type="NCBI Taxonomy" id="262724"/>
    <lineage>
        <taxon>Bacteria</taxon>
        <taxon>Thermotogati</taxon>
        <taxon>Deinococcota</taxon>
        <taxon>Deinococci</taxon>
        <taxon>Thermales</taxon>
        <taxon>Thermaceae</taxon>
        <taxon>Thermus</taxon>
    </lineage>
</organism>
<gene>
    <name evidence="1" type="primary">hisD</name>
    <name type="ordered locus">TT_C0370</name>
</gene>